<accession>O94631</accession>
<sequence length="301" mass="33402">MIRSRVNLAREVPKKAKAHLSKERRLIKEDSEFVFGTHSVKNALATRKRECRALYVQNADIHSEFEEFLNKLQYKIPIKSVNKEHLNQITACRPHNGVVLEASSLNVPTISDLLFPAGEEYNNKNGQDSPHNDLNEGKSSSSDNYPPLYVYVDGITDPQNMGAVIRSAYILGAKGILLSKKHNTFLSPVVSKASAGALEVFNISHVKNPMVFLRNSVLKGWKVIGTKPALPDNKDQIYTPHKIKTELMNEPKILVLGSEKGLRTNILTQCSHYVSIPGGDKYVDSLNVSVAAGILLYSLVN</sequence>
<proteinExistence type="inferred from homology"/>
<keyword id="KW-0489">Methyltransferase</keyword>
<keyword id="KW-0496">Mitochondrion</keyword>
<keyword id="KW-1185">Reference proteome</keyword>
<keyword id="KW-0698">rRNA processing</keyword>
<keyword id="KW-0949">S-adenosyl-L-methionine</keyword>
<keyword id="KW-0808">Transferase</keyword>
<keyword id="KW-0809">Transit peptide</keyword>
<dbReference type="EC" id="2.1.1.-" evidence="1"/>
<dbReference type="EMBL" id="CU329671">
    <property type="protein sequence ID" value="CAB37444.1"/>
    <property type="molecule type" value="Genomic_DNA"/>
</dbReference>
<dbReference type="PIR" id="T39401">
    <property type="entry name" value="T39401"/>
</dbReference>
<dbReference type="RefSeq" id="NP_596705.1">
    <property type="nucleotide sequence ID" value="NM_001022629.2"/>
</dbReference>
<dbReference type="SMR" id="O94631"/>
<dbReference type="BioGRID" id="276350">
    <property type="interactions" value="9"/>
</dbReference>
<dbReference type="FunCoup" id="O94631">
    <property type="interactions" value="226"/>
</dbReference>
<dbReference type="STRING" id="284812.O94631"/>
<dbReference type="PaxDb" id="4896-SPBC1347.13c.1"/>
<dbReference type="EnsemblFungi" id="SPBC1347.13c.1">
    <property type="protein sequence ID" value="SPBC1347.13c.1:pep"/>
    <property type="gene ID" value="SPBC1347.13c"/>
</dbReference>
<dbReference type="GeneID" id="2539800"/>
<dbReference type="KEGG" id="spo:2539800"/>
<dbReference type="PomBase" id="SPBC1347.13c">
    <property type="gene designation" value="mrm1"/>
</dbReference>
<dbReference type="VEuPathDB" id="FungiDB:SPBC1347.13c"/>
<dbReference type="eggNOG" id="KOG0838">
    <property type="taxonomic scope" value="Eukaryota"/>
</dbReference>
<dbReference type="HOGENOM" id="CLU_021322_5_1_1"/>
<dbReference type="InParanoid" id="O94631"/>
<dbReference type="OMA" id="RKYAHVH"/>
<dbReference type="PhylomeDB" id="O94631"/>
<dbReference type="PRO" id="PR:O94631"/>
<dbReference type="Proteomes" id="UP000002485">
    <property type="component" value="Chromosome II"/>
</dbReference>
<dbReference type="GO" id="GO:0005759">
    <property type="term" value="C:mitochondrial matrix"/>
    <property type="evidence" value="ECO:0000304"/>
    <property type="project" value="PomBase"/>
</dbReference>
<dbReference type="GO" id="GO:0005739">
    <property type="term" value="C:mitochondrion"/>
    <property type="evidence" value="ECO:0000318"/>
    <property type="project" value="GO_Central"/>
</dbReference>
<dbReference type="GO" id="GO:0003723">
    <property type="term" value="F:RNA binding"/>
    <property type="evidence" value="ECO:0007669"/>
    <property type="project" value="InterPro"/>
</dbReference>
<dbReference type="GO" id="GO:0016435">
    <property type="term" value="F:rRNA (guanine) methyltransferase activity"/>
    <property type="evidence" value="ECO:0000318"/>
    <property type="project" value="GO_Central"/>
</dbReference>
<dbReference type="GO" id="GO:0008989">
    <property type="term" value="F:rRNA (guanine-N1-)-methyltransferase activity"/>
    <property type="evidence" value="ECO:0000250"/>
    <property type="project" value="PomBase"/>
</dbReference>
<dbReference type="GO" id="GO:0061668">
    <property type="term" value="P:mitochondrial ribosome assembly"/>
    <property type="evidence" value="ECO:0000304"/>
    <property type="project" value="PomBase"/>
</dbReference>
<dbReference type="GO" id="GO:0000963">
    <property type="term" value="P:mitochondrial RNA processing"/>
    <property type="evidence" value="ECO:0000250"/>
    <property type="project" value="PomBase"/>
</dbReference>
<dbReference type="GO" id="GO:0031167">
    <property type="term" value="P:rRNA methylation"/>
    <property type="evidence" value="ECO:0000250"/>
    <property type="project" value="PomBase"/>
</dbReference>
<dbReference type="GO" id="GO:0000154">
    <property type="term" value="P:rRNA modification"/>
    <property type="evidence" value="ECO:0000318"/>
    <property type="project" value="GO_Central"/>
</dbReference>
<dbReference type="CDD" id="cd18105">
    <property type="entry name" value="SpoU-like_MRM1"/>
    <property type="match status" value="1"/>
</dbReference>
<dbReference type="FunFam" id="3.40.1280.10:FF:000094">
    <property type="entry name" value="rRNA methyltransferase 1, mitochondrial"/>
    <property type="match status" value="1"/>
</dbReference>
<dbReference type="Gene3D" id="3.30.1330.30">
    <property type="match status" value="1"/>
</dbReference>
<dbReference type="Gene3D" id="3.40.1280.10">
    <property type="match status" value="1"/>
</dbReference>
<dbReference type="InterPro" id="IPR029028">
    <property type="entry name" value="Alpha/beta_knot_MTases"/>
</dbReference>
<dbReference type="InterPro" id="IPR047182">
    <property type="entry name" value="MRM1"/>
</dbReference>
<dbReference type="InterPro" id="IPR047261">
    <property type="entry name" value="MRM1_MeTrfase_dom"/>
</dbReference>
<dbReference type="InterPro" id="IPR029064">
    <property type="entry name" value="Ribosomal_eL30-like_sf"/>
</dbReference>
<dbReference type="InterPro" id="IPR004441">
    <property type="entry name" value="rRNA_MeTrfase_TrmH"/>
</dbReference>
<dbReference type="InterPro" id="IPR001537">
    <property type="entry name" value="SpoU_MeTrfase"/>
</dbReference>
<dbReference type="InterPro" id="IPR013123">
    <property type="entry name" value="SpoU_subst-bd"/>
</dbReference>
<dbReference type="InterPro" id="IPR029026">
    <property type="entry name" value="tRNA_m1G_MTases_N"/>
</dbReference>
<dbReference type="NCBIfam" id="TIGR00186">
    <property type="entry name" value="rRNA_methyl_3"/>
    <property type="match status" value="1"/>
</dbReference>
<dbReference type="PANTHER" id="PTHR46103">
    <property type="entry name" value="RRNA METHYLTRANSFERASE 1, MITOCHONDRIAL"/>
    <property type="match status" value="1"/>
</dbReference>
<dbReference type="PANTHER" id="PTHR46103:SF1">
    <property type="entry name" value="RRNA METHYLTRANSFERASE 1, MITOCHONDRIAL"/>
    <property type="match status" value="1"/>
</dbReference>
<dbReference type="Pfam" id="PF00588">
    <property type="entry name" value="SpoU_methylase"/>
    <property type="match status" value="1"/>
</dbReference>
<dbReference type="Pfam" id="PF08032">
    <property type="entry name" value="SpoU_sub_bind"/>
    <property type="match status" value="1"/>
</dbReference>
<dbReference type="SMART" id="SM00967">
    <property type="entry name" value="SpoU_sub_bind"/>
    <property type="match status" value="1"/>
</dbReference>
<dbReference type="SUPFAM" id="SSF75217">
    <property type="entry name" value="alpha/beta knot"/>
    <property type="match status" value="1"/>
</dbReference>
<dbReference type="SUPFAM" id="SSF55315">
    <property type="entry name" value="L30e-like"/>
    <property type="match status" value="1"/>
</dbReference>
<evidence type="ECO:0000250" key="1">
    <source>
        <dbReference type="UniProtKB" id="P25270"/>
    </source>
</evidence>
<evidence type="ECO:0000255" key="2"/>
<evidence type="ECO:0000256" key="3">
    <source>
        <dbReference type="SAM" id="MobiDB-lite"/>
    </source>
</evidence>
<evidence type="ECO:0000305" key="4"/>
<evidence type="ECO:0000312" key="5">
    <source>
        <dbReference type="PomBase" id="SPBC1347.13c"/>
    </source>
</evidence>
<protein>
    <recommendedName>
        <fullName evidence="1">rRNA methyltransferase 1, mitochondrial</fullName>
        <ecNumber evidence="1">2.1.1.-</ecNumber>
    </recommendedName>
    <alternativeName>
        <fullName evidence="1">21S rRNA (guanosine-2'-O)-methyltransferase</fullName>
    </alternativeName>
    <alternativeName>
        <fullName evidence="1">Mitochondrial large ribosomal RNA ribose methylase</fullName>
    </alternativeName>
</protein>
<feature type="transit peptide" description="Mitochondrion" evidence="2">
    <location>
        <begin position="1"/>
        <end position="11"/>
    </location>
</feature>
<feature type="chain" id="PRO_0000337261" description="rRNA methyltransferase 1, mitochondrial">
    <location>
        <begin position="12"/>
        <end position="301"/>
    </location>
</feature>
<feature type="region of interest" description="Disordered" evidence="3">
    <location>
        <begin position="121"/>
        <end position="141"/>
    </location>
</feature>
<organism>
    <name type="scientific">Schizosaccharomyces pombe (strain 972 / ATCC 24843)</name>
    <name type="common">Fission yeast</name>
    <dbReference type="NCBI Taxonomy" id="284812"/>
    <lineage>
        <taxon>Eukaryota</taxon>
        <taxon>Fungi</taxon>
        <taxon>Dikarya</taxon>
        <taxon>Ascomycota</taxon>
        <taxon>Taphrinomycotina</taxon>
        <taxon>Schizosaccharomycetes</taxon>
        <taxon>Schizosaccharomycetales</taxon>
        <taxon>Schizosaccharomycetaceae</taxon>
        <taxon>Schizosaccharomyces</taxon>
    </lineage>
</organism>
<gene>
    <name evidence="1" type="primary">mrm1</name>
    <name evidence="5" type="ORF">SPBC1347.13c</name>
</gene>
<reference key="1">
    <citation type="journal article" date="2002" name="Nature">
        <title>The genome sequence of Schizosaccharomyces pombe.</title>
        <authorList>
            <person name="Wood V."/>
            <person name="Gwilliam R."/>
            <person name="Rajandream M.A."/>
            <person name="Lyne M.H."/>
            <person name="Lyne R."/>
            <person name="Stewart A."/>
            <person name="Sgouros J.G."/>
            <person name="Peat N."/>
            <person name="Hayles J."/>
            <person name="Baker S.G."/>
            <person name="Basham D."/>
            <person name="Bowman S."/>
            <person name="Brooks K."/>
            <person name="Brown D."/>
            <person name="Brown S."/>
            <person name="Chillingworth T."/>
            <person name="Churcher C.M."/>
            <person name="Collins M."/>
            <person name="Connor R."/>
            <person name="Cronin A."/>
            <person name="Davis P."/>
            <person name="Feltwell T."/>
            <person name="Fraser A."/>
            <person name="Gentles S."/>
            <person name="Goble A."/>
            <person name="Hamlin N."/>
            <person name="Harris D.E."/>
            <person name="Hidalgo J."/>
            <person name="Hodgson G."/>
            <person name="Holroyd S."/>
            <person name="Hornsby T."/>
            <person name="Howarth S."/>
            <person name="Huckle E.J."/>
            <person name="Hunt S."/>
            <person name="Jagels K."/>
            <person name="James K.D."/>
            <person name="Jones L."/>
            <person name="Jones M."/>
            <person name="Leather S."/>
            <person name="McDonald S."/>
            <person name="McLean J."/>
            <person name="Mooney P."/>
            <person name="Moule S."/>
            <person name="Mungall K.L."/>
            <person name="Murphy L.D."/>
            <person name="Niblett D."/>
            <person name="Odell C."/>
            <person name="Oliver K."/>
            <person name="O'Neil S."/>
            <person name="Pearson D."/>
            <person name="Quail M.A."/>
            <person name="Rabbinowitsch E."/>
            <person name="Rutherford K.M."/>
            <person name="Rutter S."/>
            <person name="Saunders D."/>
            <person name="Seeger K."/>
            <person name="Sharp S."/>
            <person name="Skelton J."/>
            <person name="Simmonds M.N."/>
            <person name="Squares R."/>
            <person name="Squares S."/>
            <person name="Stevens K."/>
            <person name="Taylor K."/>
            <person name="Taylor R.G."/>
            <person name="Tivey A."/>
            <person name="Walsh S.V."/>
            <person name="Warren T."/>
            <person name="Whitehead S."/>
            <person name="Woodward J.R."/>
            <person name="Volckaert G."/>
            <person name="Aert R."/>
            <person name="Robben J."/>
            <person name="Grymonprez B."/>
            <person name="Weltjens I."/>
            <person name="Vanstreels E."/>
            <person name="Rieger M."/>
            <person name="Schaefer M."/>
            <person name="Mueller-Auer S."/>
            <person name="Gabel C."/>
            <person name="Fuchs M."/>
            <person name="Duesterhoeft A."/>
            <person name="Fritzc C."/>
            <person name="Holzer E."/>
            <person name="Moestl D."/>
            <person name="Hilbert H."/>
            <person name="Borzym K."/>
            <person name="Langer I."/>
            <person name="Beck A."/>
            <person name="Lehrach H."/>
            <person name="Reinhardt R."/>
            <person name="Pohl T.M."/>
            <person name="Eger P."/>
            <person name="Zimmermann W."/>
            <person name="Wedler H."/>
            <person name="Wambutt R."/>
            <person name="Purnelle B."/>
            <person name="Goffeau A."/>
            <person name="Cadieu E."/>
            <person name="Dreano S."/>
            <person name="Gloux S."/>
            <person name="Lelaure V."/>
            <person name="Mottier S."/>
            <person name="Galibert F."/>
            <person name="Aves S.J."/>
            <person name="Xiang Z."/>
            <person name="Hunt C."/>
            <person name="Moore K."/>
            <person name="Hurst S.M."/>
            <person name="Lucas M."/>
            <person name="Rochet M."/>
            <person name="Gaillardin C."/>
            <person name="Tallada V.A."/>
            <person name="Garzon A."/>
            <person name="Thode G."/>
            <person name="Daga R.R."/>
            <person name="Cruzado L."/>
            <person name="Jimenez J."/>
            <person name="Sanchez M."/>
            <person name="del Rey F."/>
            <person name="Benito J."/>
            <person name="Dominguez A."/>
            <person name="Revuelta J.L."/>
            <person name="Moreno S."/>
            <person name="Armstrong J."/>
            <person name="Forsburg S.L."/>
            <person name="Cerutti L."/>
            <person name="Lowe T."/>
            <person name="McCombie W.R."/>
            <person name="Paulsen I."/>
            <person name="Potashkin J."/>
            <person name="Shpakovski G.V."/>
            <person name="Ussery D."/>
            <person name="Barrell B.G."/>
            <person name="Nurse P."/>
        </authorList>
    </citation>
    <scope>NUCLEOTIDE SEQUENCE [LARGE SCALE GENOMIC DNA]</scope>
    <source>
        <strain>972 / ATCC 24843</strain>
    </source>
</reference>
<name>MRM1_SCHPO</name>
<comment type="function">
    <text evidence="1">S-adenosyl-L-methionine-dependent 2'-O-ribose methyltransferase that catalyzes the formation of the 2'-O-methylguanosine corresponding to position 2270 in S.cerevisiae 21S mitochondrial large subunit ribosomal RNA (mtLSU rRNA), a universally conserved modification in the peptidyl transferase domain of the mtLSU rRNA.</text>
</comment>
<comment type="catalytic activity">
    <reaction evidence="1">
        <text>a guanosine in 21S rRNA + S-adenosyl-L-methionine = a 2'-O-methylguanosine in 21S rRNA + S-adenosyl-L-homocysteine + H(+)</text>
        <dbReference type="Rhea" id="RHEA:47772"/>
        <dbReference type="Rhea" id="RHEA-COMP:11907"/>
        <dbReference type="Rhea" id="RHEA-COMP:11908"/>
        <dbReference type="ChEBI" id="CHEBI:15378"/>
        <dbReference type="ChEBI" id="CHEBI:57856"/>
        <dbReference type="ChEBI" id="CHEBI:59789"/>
        <dbReference type="ChEBI" id="CHEBI:74269"/>
        <dbReference type="ChEBI" id="CHEBI:74445"/>
    </reaction>
</comment>
<comment type="subcellular location">
    <subcellularLocation>
        <location evidence="1">Mitochondrion</location>
    </subcellularLocation>
</comment>
<comment type="similarity">
    <text evidence="4">Belongs to the class IV-like SAM-binding methyltransferase superfamily. RNA methyltransferase TrmH family.</text>
</comment>